<gene>
    <name type="primary">Rsf1</name>
    <name type="synonym">ROX21</name>
    <name type="ORF">CG5655</name>
</gene>
<protein>
    <recommendedName>
        <fullName>RNA-binding protein Rsf1</fullName>
    </recommendedName>
    <alternativeName>
        <fullName>RNA-binding protein Rox21</fullName>
    </alternativeName>
</protein>
<organism>
    <name type="scientific">Drosophila melanogaster</name>
    <name type="common">Fruit fly</name>
    <dbReference type="NCBI Taxonomy" id="7227"/>
    <lineage>
        <taxon>Eukaryota</taxon>
        <taxon>Metazoa</taxon>
        <taxon>Ecdysozoa</taxon>
        <taxon>Arthropoda</taxon>
        <taxon>Hexapoda</taxon>
        <taxon>Insecta</taxon>
        <taxon>Pterygota</taxon>
        <taxon>Neoptera</taxon>
        <taxon>Endopterygota</taxon>
        <taxon>Diptera</taxon>
        <taxon>Brachycera</taxon>
        <taxon>Muscomorpha</taxon>
        <taxon>Ephydroidea</taxon>
        <taxon>Drosophilidae</taxon>
        <taxon>Drosophila</taxon>
        <taxon>Sophophora</taxon>
    </lineage>
</organism>
<keyword id="KW-0539">Nucleus</keyword>
<keyword id="KW-0597">Phosphoprotein</keyword>
<keyword id="KW-1185">Reference proteome</keyword>
<keyword id="KW-0694">RNA-binding</keyword>
<name>RX21_DROME</name>
<evidence type="ECO:0000250" key="1"/>
<evidence type="ECO:0000255" key="2">
    <source>
        <dbReference type="PROSITE-ProRule" id="PRU00176"/>
    </source>
</evidence>
<evidence type="ECO:0000256" key="3">
    <source>
        <dbReference type="SAM" id="MobiDB-lite"/>
    </source>
</evidence>
<evidence type="ECO:0000269" key="4">
    <source>
    </source>
</evidence>
<evidence type="ECO:0000305" key="5"/>
<accession>Q24491</accession>
<accession>Q24424</accession>
<accession>Q9VL15</accession>
<dbReference type="EMBL" id="L34935">
    <property type="protein sequence ID" value="AAA73521.1"/>
    <property type="molecule type" value="mRNA"/>
</dbReference>
<dbReference type="EMBL" id="AE014134">
    <property type="protein sequence ID" value="AAF52890.1"/>
    <property type="status" value="ALT_INIT"/>
    <property type="molecule type" value="Genomic_DNA"/>
</dbReference>
<dbReference type="EMBL" id="L23835">
    <property type="protein sequence ID" value="AAA28729.1"/>
    <property type="molecule type" value="mRNA"/>
</dbReference>
<dbReference type="RefSeq" id="NP_001260318.1">
    <property type="nucleotide sequence ID" value="NM_001273389.1"/>
</dbReference>
<dbReference type="RefSeq" id="NP_477001.2">
    <property type="nucleotide sequence ID" value="NM_057653.3"/>
</dbReference>
<dbReference type="SMR" id="Q24491"/>
<dbReference type="BioGRID" id="60458">
    <property type="interactions" value="4"/>
</dbReference>
<dbReference type="FunCoup" id="Q24491">
    <property type="interactions" value="191"/>
</dbReference>
<dbReference type="IntAct" id="Q24491">
    <property type="interactions" value="9"/>
</dbReference>
<dbReference type="STRING" id="7227.FBpp0305603"/>
<dbReference type="iPTMnet" id="Q24491"/>
<dbReference type="PaxDb" id="7227-FBpp0305603"/>
<dbReference type="DNASU" id="34370"/>
<dbReference type="EnsemblMetazoa" id="FBtr0333411">
    <property type="protein sequence ID" value="FBpp0305603"/>
    <property type="gene ID" value="FBgn0011305"/>
</dbReference>
<dbReference type="GeneID" id="34370"/>
<dbReference type="KEGG" id="dme:Dmel_CG5655"/>
<dbReference type="AGR" id="FB:FBgn0011305"/>
<dbReference type="CTD" id="51773"/>
<dbReference type="FlyBase" id="FBgn0011305">
    <property type="gene designation" value="Rsf1"/>
</dbReference>
<dbReference type="VEuPathDB" id="VectorBase:FBgn0011305"/>
<dbReference type="eggNOG" id="KOG0107">
    <property type="taxonomic scope" value="Eukaryota"/>
</dbReference>
<dbReference type="HOGENOM" id="CLU_012062_20_5_1"/>
<dbReference type="InParanoid" id="Q24491"/>
<dbReference type="OrthoDB" id="5970at2759"/>
<dbReference type="BioGRID-ORCS" id="34370">
    <property type="hits" value="0 hits in 1 CRISPR screen"/>
</dbReference>
<dbReference type="GenomeRNAi" id="34370"/>
<dbReference type="PRO" id="PR:Q24491"/>
<dbReference type="Proteomes" id="UP000000803">
    <property type="component" value="Chromosome 2L"/>
</dbReference>
<dbReference type="Bgee" id="FBgn0011305">
    <property type="expression patterns" value="Expressed in T neuron T4b (Drosophila) in embryonic/larval optic lobe (Drosophila) and 278 other cell types or tissues"/>
</dbReference>
<dbReference type="ExpressionAtlas" id="Q24491">
    <property type="expression patterns" value="baseline and differential"/>
</dbReference>
<dbReference type="GO" id="GO:0016607">
    <property type="term" value="C:nuclear speck"/>
    <property type="evidence" value="ECO:0000318"/>
    <property type="project" value="GO_Central"/>
</dbReference>
<dbReference type="GO" id="GO:0005634">
    <property type="term" value="C:nucleus"/>
    <property type="evidence" value="ECO:0000314"/>
    <property type="project" value="FlyBase"/>
</dbReference>
<dbReference type="GO" id="GO:0003729">
    <property type="term" value="F:mRNA binding"/>
    <property type="evidence" value="ECO:0000314"/>
    <property type="project" value="FlyBase"/>
</dbReference>
<dbReference type="GO" id="GO:0045292">
    <property type="term" value="P:mRNA cis splicing, via spliceosome"/>
    <property type="evidence" value="ECO:0000318"/>
    <property type="project" value="GO_Central"/>
</dbReference>
<dbReference type="GO" id="GO:0000381">
    <property type="term" value="P:regulation of alternative mRNA splicing, via spliceosome"/>
    <property type="evidence" value="ECO:0000315"/>
    <property type="project" value="FlyBase"/>
</dbReference>
<dbReference type="GO" id="GO:0010468">
    <property type="term" value="P:regulation of gene expression"/>
    <property type="evidence" value="ECO:0000315"/>
    <property type="project" value="FlyBase"/>
</dbReference>
<dbReference type="GO" id="GO:0031440">
    <property type="term" value="P:regulation of mRNA 3'-end processing"/>
    <property type="evidence" value="ECO:0000315"/>
    <property type="project" value="FlyBase"/>
</dbReference>
<dbReference type="GO" id="GO:0001178">
    <property type="term" value="P:regulation of transcriptional start site selection at RNA polymerase II promoter"/>
    <property type="evidence" value="ECO:0000315"/>
    <property type="project" value="FlyBase"/>
</dbReference>
<dbReference type="CDD" id="cd12373">
    <property type="entry name" value="RRM_SRSF3_like"/>
    <property type="match status" value="1"/>
</dbReference>
<dbReference type="FunFam" id="3.30.70.330:FF:000540">
    <property type="entry name" value="RNA-binding protein Rsf1"/>
    <property type="match status" value="1"/>
</dbReference>
<dbReference type="Gene3D" id="3.30.70.330">
    <property type="match status" value="1"/>
</dbReference>
<dbReference type="InterPro" id="IPR012677">
    <property type="entry name" value="Nucleotide-bd_a/b_plait_sf"/>
</dbReference>
<dbReference type="InterPro" id="IPR035979">
    <property type="entry name" value="RBD_domain_sf"/>
</dbReference>
<dbReference type="InterPro" id="IPR000504">
    <property type="entry name" value="RRM_dom"/>
</dbReference>
<dbReference type="PANTHER" id="PTHR48038">
    <property type="entry name" value="RIBONUCLEOPROTEIN RB97D"/>
    <property type="match status" value="1"/>
</dbReference>
<dbReference type="PANTHER" id="PTHR48038:SF3">
    <property type="entry name" value="SPLICING FACTOR, ARGININE_SERINE-RICH 1-RELATED"/>
    <property type="match status" value="1"/>
</dbReference>
<dbReference type="Pfam" id="PF00076">
    <property type="entry name" value="RRM_1"/>
    <property type="match status" value="1"/>
</dbReference>
<dbReference type="SMART" id="SM00360">
    <property type="entry name" value="RRM"/>
    <property type="match status" value="1"/>
</dbReference>
<dbReference type="SUPFAM" id="SSF54928">
    <property type="entry name" value="RNA-binding domain, RBD"/>
    <property type="match status" value="1"/>
</dbReference>
<dbReference type="PROSITE" id="PS50102">
    <property type="entry name" value="RRM"/>
    <property type="match status" value="1"/>
</dbReference>
<reference key="1">
    <citation type="journal article" date="1995" name="Gene">
        <title>Novel Drosophila melanogaster genes encoding RRM-type RNA-binding proteins identified by a degenerate PCR strategy.</title>
        <authorList>
            <person name="Brand S.F."/>
            <person name="Pichoff S."/>
            <person name="Noselli S."/>
            <person name="Bourbon H.-M."/>
        </authorList>
    </citation>
    <scope>NUCLEOTIDE SEQUENCE [MRNA]</scope>
</reference>
<reference key="2">
    <citation type="journal article" date="2000" name="Science">
        <title>The genome sequence of Drosophila melanogaster.</title>
        <authorList>
            <person name="Adams M.D."/>
            <person name="Celniker S.E."/>
            <person name="Holt R.A."/>
            <person name="Evans C.A."/>
            <person name="Gocayne J.D."/>
            <person name="Amanatides P.G."/>
            <person name="Scherer S.E."/>
            <person name="Li P.W."/>
            <person name="Hoskins R.A."/>
            <person name="Galle R.F."/>
            <person name="George R.A."/>
            <person name="Lewis S.E."/>
            <person name="Richards S."/>
            <person name="Ashburner M."/>
            <person name="Henderson S.N."/>
            <person name="Sutton G.G."/>
            <person name="Wortman J.R."/>
            <person name="Yandell M.D."/>
            <person name="Zhang Q."/>
            <person name="Chen L.X."/>
            <person name="Brandon R.C."/>
            <person name="Rogers Y.-H.C."/>
            <person name="Blazej R.G."/>
            <person name="Champe M."/>
            <person name="Pfeiffer B.D."/>
            <person name="Wan K.H."/>
            <person name="Doyle C."/>
            <person name="Baxter E.G."/>
            <person name="Helt G."/>
            <person name="Nelson C.R."/>
            <person name="Miklos G.L.G."/>
            <person name="Abril J.F."/>
            <person name="Agbayani A."/>
            <person name="An H.-J."/>
            <person name="Andrews-Pfannkoch C."/>
            <person name="Baldwin D."/>
            <person name="Ballew R.M."/>
            <person name="Basu A."/>
            <person name="Baxendale J."/>
            <person name="Bayraktaroglu L."/>
            <person name="Beasley E.M."/>
            <person name="Beeson K.Y."/>
            <person name="Benos P.V."/>
            <person name="Berman B.P."/>
            <person name="Bhandari D."/>
            <person name="Bolshakov S."/>
            <person name="Borkova D."/>
            <person name="Botchan M.R."/>
            <person name="Bouck J."/>
            <person name="Brokstein P."/>
            <person name="Brottier P."/>
            <person name="Burtis K.C."/>
            <person name="Busam D.A."/>
            <person name="Butler H."/>
            <person name="Cadieu E."/>
            <person name="Center A."/>
            <person name="Chandra I."/>
            <person name="Cherry J.M."/>
            <person name="Cawley S."/>
            <person name="Dahlke C."/>
            <person name="Davenport L.B."/>
            <person name="Davies P."/>
            <person name="de Pablos B."/>
            <person name="Delcher A."/>
            <person name="Deng Z."/>
            <person name="Mays A.D."/>
            <person name="Dew I."/>
            <person name="Dietz S.M."/>
            <person name="Dodson K."/>
            <person name="Doup L.E."/>
            <person name="Downes M."/>
            <person name="Dugan-Rocha S."/>
            <person name="Dunkov B.C."/>
            <person name="Dunn P."/>
            <person name="Durbin K.J."/>
            <person name="Evangelista C.C."/>
            <person name="Ferraz C."/>
            <person name="Ferriera S."/>
            <person name="Fleischmann W."/>
            <person name="Fosler C."/>
            <person name="Gabrielian A.E."/>
            <person name="Garg N.S."/>
            <person name="Gelbart W.M."/>
            <person name="Glasser K."/>
            <person name="Glodek A."/>
            <person name="Gong F."/>
            <person name="Gorrell J.H."/>
            <person name="Gu Z."/>
            <person name="Guan P."/>
            <person name="Harris M."/>
            <person name="Harris N.L."/>
            <person name="Harvey D.A."/>
            <person name="Heiman T.J."/>
            <person name="Hernandez J.R."/>
            <person name="Houck J."/>
            <person name="Hostin D."/>
            <person name="Houston K.A."/>
            <person name="Howland T.J."/>
            <person name="Wei M.-H."/>
            <person name="Ibegwam C."/>
            <person name="Jalali M."/>
            <person name="Kalush F."/>
            <person name="Karpen G.H."/>
            <person name="Ke Z."/>
            <person name="Kennison J.A."/>
            <person name="Ketchum K.A."/>
            <person name="Kimmel B.E."/>
            <person name="Kodira C.D."/>
            <person name="Kraft C.L."/>
            <person name="Kravitz S."/>
            <person name="Kulp D."/>
            <person name="Lai Z."/>
            <person name="Lasko P."/>
            <person name="Lei Y."/>
            <person name="Levitsky A.A."/>
            <person name="Li J.H."/>
            <person name="Li Z."/>
            <person name="Liang Y."/>
            <person name="Lin X."/>
            <person name="Liu X."/>
            <person name="Mattei B."/>
            <person name="McIntosh T.C."/>
            <person name="McLeod M.P."/>
            <person name="McPherson D."/>
            <person name="Merkulov G."/>
            <person name="Milshina N.V."/>
            <person name="Mobarry C."/>
            <person name="Morris J."/>
            <person name="Moshrefi A."/>
            <person name="Mount S.M."/>
            <person name="Moy M."/>
            <person name="Murphy B."/>
            <person name="Murphy L."/>
            <person name="Muzny D.M."/>
            <person name="Nelson D.L."/>
            <person name="Nelson D.R."/>
            <person name="Nelson K.A."/>
            <person name="Nixon K."/>
            <person name="Nusskern D.R."/>
            <person name="Pacleb J.M."/>
            <person name="Palazzolo M."/>
            <person name="Pittman G.S."/>
            <person name="Pan S."/>
            <person name="Pollard J."/>
            <person name="Puri V."/>
            <person name="Reese M.G."/>
            <person name="Reinert K."/>
            <person name="Remington K."/>
            <person name="Saunders R.D.C."/>
            <person name="Scheeler F."/>
            <person name="Shen H."/>
            <person name="Shue B.C."/>
            <person name="Siden-Kiamos I."/>
            <person name="Simpson M."/>
            <person name="Skupski M.P."/>
            <person name="Smith T.J."/>
            <person name="Spier E."/>
            <person name="Spradling A.C."/>
            <person name="Stapleton M."/>
            <person name="Strong R."/>
            <person name="Sun E."/>
            <person name="Svirskas R."/>
            <person name="Tector C."/>
            <person name="Turner R."/>
            <person name="Venter E."/>
            <person name="Wang A.H."/>
            <person name="Wang X."/>
            <person name="Wang Z.-Y."/>
            <person name="Wassarman D.A."/>
            <person name="Weinstock G.M."/>
            <person name="Weissenbach J."/>
            <person name="Williams S.M."/>
            <person name="Woodage T."/>
            <person name="Worley K.C."/>
            <person name="Wu D."/>
            <person name="Yang S."/>
            <person name="Yao Q.A."/>
            <person name="Ye J."/>
            <person name="Yeh R.-F."/>
            <person name="Zaveri J.S."/>
            <person name="Zhan M."/>
            <person name="Zhang G."/>
            <person name="Zhao Q."/>
            <person name="Zheng L."/>
            <person name="Zheng X.H."/>
            <person name="Zhong F.N."/>
            <person name="Zhong W."/>
            <person name="Zhou X."/>
            <person name="Zhu S.C."/>
            <person name="Zhu X."/>
            <person name="Smith H.O."/>
            <person name="Gibbs R.A."/>
            <person name="Myers E.W."/>
            <person name="Rubin G.M."/>
            <person name="Venter J.C."/>
        </authorList>
    </citation>
    <scope>NUCLEOTIDE SEQUENCE [LARGE SCALE GENOMIC DNA]</scope>
    <source>
        <strain>Berkeley</strain>
    </source>
</reference>
<reference key="3">
    <citation type="journal article" date="2002" name="Genome Biol.">
        <title>Annotation of the Drosophila melanogaster euchromatic genome: a systematic review.</title>
        <authorList>
            <person name="Misra S."/>
            <person name="Crosby M.A."/>
            <person name="Mungall C.J."/>
            <person name="Matthews B.B."/>
            <person name="Campbell K.S."/>
            <person name="Hradecky P."/>
            <person name="Huang Y."/>
            <person name="Kaminker J.S."/>
            <person name="Millburn G.H."/>
            <person name="Prochnik S.E."/>
            <person name="Smith C.D."/>
            <person name="Tupy J.L."/>
            <person name="Whitfield E.J."/>
            <person name="Bayraktaroglu L."/>
            <person name="Berman B.P."/>
            <person name="Bettencourt B.R."/>
            <person name="Celniker S.E."/>
            <person name="de Grey A.D.N.J."/>
            <person name="Drysdale R.A."/>
            <person name="Harris N.L."/>
            <person name="Richter J."/>
            <person name="Russo S."/>
            <person name="Schroeder A.J."/>
            <person name="Shu S.Q."/>
            <person name="Stapleton M."/>
            <person name="Yamada C."/>
            <person name="Ashburner M."/>
            <person name="Gelbart W.M."/>
            <person name="Rubin G.M."/>
            <person name="Lewis S.E."/>
        </authorList>
    </citation>
    <scope>GENOME REANNOTATION</scope>
    <source>
        <strain>Berkeley</strain>
    </source>
</reference>
<reference key="4">
    <citation type="submission" date="1993-08" db="EMBL/GenBank/DDBJ databases">
        <authorList>
            <person name="Brand S.F."/>
            <person name="Bourbon H.-M."/>
        </authorList>
    </citation>
    <scope>NUCLEOTIDE SEQUENCE OF 8-50</scope>
</reference>
<reference key="5">
    <citation type="journal article" date="2008" name="J. Proteome Res.">
        <title>Phosphoproteome analysis of Drosophila melanogaster embryos.</title>
        <authorList>
            <person name="Zhai B."/>
            <person name="Villen J."/>
            <person name="Beausoleil S.A."/>
            <person name="Mintseris J."/>
            <person name="Gygi S.P."/>
        </authorList>
    </citation>
    <scope>PHOSPHORYLATION [LARGE SCALE ANALYSIS] AT THR-106; SER-168; SER-171; SER-174; SER-188 AND SER-190</scope>
    <scope>IDENTIFICATION BY MASS SPECTROMETRY</scope>
    <source>
        <tissue>Embryo</tissue>
    </source>
</reference>
<proteinExistence type="evidence at protein level"/>
<sequence>MGDQRGTRVYVGNLTDKVKKDDLEGEFTKYGKLNSVWIAFNPPGFAFVEFEHRDDAEKACDILNGSELLGSQLRVEISKGRPRQGRRGGPMDRGGRRGDFGRHSITSGGSGGGGFRQRGSSGSSSRHTERGYSSGRSGASSYNGREGGGSGFNRREVYGGGRDSSRYSSGSSASYGRTGGQSAGRFRSRSPVGNHRF</sequence>
<feature type="chain" id="PRO_0000081896" description="RNA-binding protein Rsf1">
    <location>
        <begin position="1"/>
        <end position="197"/>
    </location>
</feature>
<feature type="domain" description="RRM" evidence="2">
    <location>
        <begin position="7"/>
        <end position="80"/>
    </location>
</feature>
<feature type="region of interest" description="Disordered" evidence="3">
    <location>
        <begin position="74"/>
        <end position="197"/>
    </location>
</feature>
<feature type="compositionally biased region" description="Basic and acidic residues" evidence="3">
    <location>
        <begin position="89"/>
        <end position="102"/>
    </location>
</feature>
<feature type="compositionally biased region" description="Low complexity" evidence="3">
    <location>
        <begin position="117"/>
        <end position="144"/>
    </location>
</feature>
<feature type="compositionally biased region" description="Low complexity" evidence="3">
    <location>
        <begin position="166"/>
        <end position="176"/>
    </location>
</feature>
<feature type="modified residue" description="Phosphothreonine" evidence="4">
    <location>
        <position position="106"/>
    </location>
</feature>
<feature type="modified residue" description="Phosphoserine" evidence="4">
    <location>
        <position position="168"/>
    </location>
</feature>
<feature type="modified residue" description="Phosphoserine" evidence="4">
    <location>
        <position position="171"/>
    </location>
</feature>
<feature type="modified residue" description="Phosphoserine" evidence="4">
    <location>
        <position position="174"/>
    </location>
</feature>
<feature type="modified residue" description="Phosphoserine" evidence="4">
    <location>
        <position position="188"/>
    </location>
</feature>
<feature type="modified residue" description="Phosphoserine" evidence="4">
    <location>
        <position position="190"/>
    </location>
</feature>
<comment type="function">
    <text>May control important aspects of development.</text>
</comment>
<comment type="subcellular location">
    <subcellularLocation>
        <location>Nucleus</location>
    </subcellularLocation>
</comment>
<comment type="PTM">
    <text evidence="1">Extensively phosphorylated on serine residues in the RS domain.</text>
</comment>
<comment type="similarity">
    <text evidence="5">Belongs to the splicing factor SR family.</text>
</comment>
<comment type="sequence caution" evidence="5">
    <conflict type="erroneous initiation">
        <sequence resource="EMBL-CDS" id="AAF52890"/>
    </conflict>
</comment>